<reference key="1">
    <citation type="submission" date="2006-11" db="EMBL/GenBank/DDBJ databases">
        <title>Sequence of Campylobacter fetus subsp. fetus 82-40.</title>
        <authorList>
            <person name="Fouts D.E."/>
            <person name="Nelson K.E."/>
        </authorList>
    </citation>
    <scope>NUCLEOTIDE SEQUENCE [LARGE SCALE GENOMIC DNA]</scope>
    <source>
        <strain>82-40</strain>
    </source>
</reference>
<dbReference type="EC" id="6.1.1.21" evidence="1"/>
<dbReference type="EMBL" id="CP000487">
    <property type="protein sequence ID" value="ABK82091.1"/>
    <property type="molecule type" value="Genomic_DNA"/>
</dbReference>
<dbReference type="RefSeq" id="WP_011731994.1">
    <property type="nucleotide sequence ID" value="NC_008599.1"/>
</dbReference>
<dbReference type="SMR" id="A0RPD3"/>
<dbReference type="GeneID" id="61064728"/>
<dbReference type="KEGG" id="cff:CFF8240_0894"/>
<dbReference type="eggNOG" id="COG0124">
    <property type="taxonomic scope" value="Bacteria"/>
</dbReference>
<dbReference type="HOGENOM" id="CLU_025113_1_1_7"/>
<dbReference type="Proteomes" id="UP000000760">
    <property type="component" value="Chromosome"/>
</dbReference>
<dbReference type="GO" id="GO:0005737">
    <property type="term" value="C:cytoplasm"/>
    <property type="evidence" value="ECO:0007669"/>
    <property type="project" value="UniProtKB-SubCell"/>
</dbReference>
<dbReference type="GO" id="GO:0005524">
    <property type="term" value="F:ATP binding"/>
    <property type="evidence" value="ECO:0007669"/>
    <property type="project" value="UniProtKB-UniRule"/>
</dbReference>
<dbReference type="GO" id="GO:0004821">
    <property type="term" value="F:histidine-tRNA ligase activity"/>
    <property type="evidence" value="ECO:0007669"/>
    <property type="project" value="UniProtKB-UniRule"/>
</dbReference>
<dbReference type="GO" id="GO:0006427">
    <property type="term" value="P:histidyl-tRNA aminoacylation"/>
    <property type="evidence" value="ECO:0007669"/>
    <property type="project" value="UniProtKB-UniRule"/>
</dbReference>
<dbReference type="CDD" id="cd00773">
    <property type="entry name" value="HisRS-like_core"/>
    <property type="match status" value="1"/>
</dbReference>
<dbReference type="Gene3D" id="3.40.50.800">
    <property type="entry name" value="Anticodon-binding domain"/>
    <property type="match status" value="1"/>
</dbReference>
<dbReference type="Gene3D" id="3.30.930.10">
    <property type="entry name" value="Bira Bifunctional Protein, Domain 2"/>
    <property type="match status" value="1"/>
</dbReference>
<dbReference type="HAMAP" id="MF_00127">
    <property type="entry name" value="His_tRNA_synth"/>
    <property type="match status" value="1"/>
</dbReference>
<dbReference type="InterPro" id="IPR006195">
    <property type="entry name" value="aa-tRNA-synth_II"/>
</dbReference>
<dbReference type="InterPro" id="IPR045864">
    <property type="entry name" value="aa-tRNA-synth_II/BPL/LPL"/>
</dbReference>
<dbReference type="InterPro" id="IPR004154">
    <property type="entry name" value="Anticodon-bd"/>
</dbReference>
<dbReference type="InterPro" id="IPR036621">
    <property type="entry name" value="Anticodon-bd_dom_sf"/>
</dbReference>
<dbReference type="InterPro" id="IPR015807">
    <property type="entry name" value="His-tRNA-ligase"/>
</dbReference>
<dbReference type="InterPro" id="IPR041715">
    <property type="entry name" value="HisRS-like_core"/>
</dbReference>
<dbReference type="InterPro" id="IPR004516">
    <property type="entry name" value="HisRS/HisZ"/>
</dbReference>
<dbReference type="NCBIfam" id="TIGR00442">
    <property type="entry name" value="hisS"/>
    <property type="match status" value="1"/>
</dbReference>
<dbReference type="PANTHER" id="PTHR43707:SF1">
    <property type="entry name" value="HISTIDINE--TRNA LIGASE, MITOCHONDRIAL-RELATED"/>
    <property type="match status" value="1"/>
</dbReference>
<dbReference type="PANTHER" id="PTHR43707">
    <property type="entry name" value="HISTIDYL-TRNA SYNTHETASE"/>
    <property type="match status" value="1"/>
</dbReference>
<dbReference type="Pfam" id="PF03129">
    <property type="entry name" value="HGTP_anticodon"/>
    <property type="match status" value="1"/>
</dbReference>
<dbReference type="Pfam" id="PF13393">
    <property type="entry name" value="tRNA-synt_His"/>
    <property type="match status" value="1"/>
</dbReference>
<dbReference type="PIRSF" id="PIRSF001549">
    <property type="entry name" value="His-tRNA_synth"/>
    <property type="match status" value="1"/>
</dbReference>
<dbReference type="SUPFAM" id="SSF52954">
    <property type="entry name" value="Class II aaRS ABD-related"/>
    <property type="match status" value="1"/>
</dbReference>
<dbReference type="SUPFAM" id="SSF55681">
    <property type="entry name" value="Class II aaRS and biotin synthetases"/>
    <property type="match status" value="1"/>
</dbReference>
<dbReference type="PROSITE" id="PS50862">
    <property type="entry name" value="AA_TRNA_LIGASE_II"/>
    <property type="match status" value="1"/>
</dbReference>
<comment type="catalytic activity">
    <reaction evidence="1">
        <text>tRNA(His) + L-histidine + ATP = L-histidyl-tRNA(His) + AMP + diphosphate + H(+)</text>
        <dbReference type="Rhea" id="RHEA:17313"/>
        <dbReference type="Rhea" id="RHEA-COMP:9665"/>
        <dbReference type="Rhea" id="RHEA-COMP:9689"/>
        <dbReference type="ChEBI" id="CHEBI:15378"/>
        <dbReference type="ChEBI" id="CHEBI:30616"/>
        <dbReference type="ChEBI" id="CHEBI:33019"/>
        <dbReference type="ChEBI" id="CHEBI:57595"/>
        <dbReference type="ChEBI" id="CHEBI:78442"/>
        <dbReference type="ChEBI" id="CHEBI:78527"/>
        <dbReference type="ChEBI" id="CHEBI:456215"/>
        <dbReference type="EC" id="6.1.1.21"/>
    </reaction>
</comment>
<comment type="subunit">
    <text evidence="1">Homodimer.</text>
</comment>
<comment type="subcellular location">
    <subcellularLocation>
        <location evidence="1">Cytoplasm</location>
    </subcellularLocation>
</comment>
<comment type="similarity">
    <text evidence="1">Belongs to the class-II aminoacyl-tRNA synthetase family.</text>
</comment>
<proteinExistence type="inferred from homology"/>
<evidence type="ECO:0000255" key="1">
    <source>
        <dbReference type="HAMAP-Rule" id="MF_00127"/>
    </source>
</evidence>
<feature type="chain" id="PRO_1000016334" description="Histidine--tRNA ligase">
    <location>
        <begin position="1"/>
        <end position="409"/>
    </location>
</feature>
<sequence>MINALRGMKDLLDSDGKLYKFIVETCEQITKNYGYELCETPKMEETSLFKRSVGESSDIVGKEMYQFIDKGGNDVCLRPEGTAGVVRAFIEAKFDKAGGVKRYYYYGSMFRYERPQRGRLREFHQFGVECFGEASVYEDASVILMLNEILDKFGIETTLKINSLGDSECMPKYRQKLISFIDEKKDQLCEDCRRRLVTNPIRVLDCKKEHCQILLKNAPLITENLNEECYSEFEQLKDILTKNGVKFEVDGRLVRGLDYYCKTAFEFVSDEIGSKSAVAGGGRYDRLVDFLGGKSTPAVGWAMGIERIMEILKQKDMPNSRDGIYICALDKKYIDEIYKIGFKLRKNYKVEISYEAKSPNKHLNLADKKFAKLFLCMGEDEAKNGEIWYKNLENKNEKRIKILNLEGEL</sequence>
<name>SYH_CAMFF</name>
<gene>
    <name evidence="1" type="primary">hisS</name>
    <name type="ordered locus">CFF8240_0894</name>
</gene>
<keyword id="KW-0030">Aminoacyl-tRNA synthetase</keyword>
<keyword id="KW-0067">ATP-binding</keyword>
<keyword id="KW-0963">Cytoplasm</keyword>
<keyword id="KW-0436">Ligase</keyword>
<keyword id="KW-0547">Nucleotide-binding</keyword>
<keyword id="KW-0648">Protein biosynthesis</keyword>
<organism>
    <name type="scientific">Campylobacter fetus subsp. fetus (strain 82-40)</name>
    <dbReference type="NCBI Taxonomy" id="360106"/>
    <lineage>
        <taxon>Bacteria</taxon>
        <taxon>Pseudomonadati</taxon>
        <taxon>Campylobacterota</taxon>
        <taxon>Epsilonproteobacteria</taxon>
        <taxon>Campylobacterales</taxon>
        <taxon>Campylobacteraceae</taxon>
        <taxon>Campylobacter</taxon>
    </lineage>
</organism>
<protein>
    <recommendedName>
        <fullName evidence="1">Histidine--tRNA ligase</fullName>
        <ecNumber evidence="1">6.1.1.21</ecNumber>
    </recommendedName>
    <alternativeName>
        <fullName evidence="1">Histidyl-tRNA synthetase</fullName>
        <shortName evidence="1">HisRS</shortName>
    </alternativeName>
</protein>
<accession>A0RPD3</accession>